<feature type="chain" id="PRO_0000103245" description="Probable 2-dehydro-3-deoxy-D-pentonate aldolase YjhH">
    <location>
        <begin position="1"/>
        <end position="301"/>
    </location>
</feature>
<feature type="active site" description="Charge relay system" evidence="1">
    <location>
        <position position="46"/>
    </location>
</feature>
<feature type="active site" description="Charge relay system" evidence="1">
    <location>
        <position position="109"/>
    </location>
</feature>
<feature type="active site" description="Proton donor" evidence="1">
    <location>
        <position position="135"/>
    </location>
</feature>
<feature type="active site" description="Schiff-base intermediate with substrate" evidence="1">
    <location>
        <position position="164"/>
    </location>
</feature>
<reference key="1">
    <citation type="journal article" date="1995" name="Nucleic Acids Res.">
        <title>Analysis of the Escherichia coli genome VI: DNA sequence of the region from 92.8 through 100 minutes.</title>
        <authorList>
            <person name="Burland V.D."/>
            <person name="Plunkett G. III"/>
            <person name="Sofia H.J."/>
            <person name="Daniels D.L."/>
            <person name="Blattner F.R."/>
        </authorList>
    </citation>
    <scope>NUCLEOTIDE SEQUENCE [LARGE SCALE GENOMIC DNA]</scope>
    <source>
        <strain>K12 / MG1655 / ATCC 47076</strain>
    </source>
</reference>
<reference key="2">
    <citation type="journal article" date="1997" name="Science">
        <title>The complete genome sequence of Escherichia coli K-12.</title>
        <authorList>
            <person name="Blattner F.R."/>
            <person name="Plunkett G. III"/>
            <person name="Bloch C.A."/>
            <person name="Perna N.T."/>
            <person name="Burland V."/>
            <person name="Riley M."/>
            <person name="Collado-Vides J."/>
            <person name="Glasner J.D."/>
            <person name="Rode C.K."/>
            <person name="Mayhew G.F."/>
            <person name="Gregor J."/>
            <person name="Davis N.W."/>
            <person name="Kirkpatrick H.A."/>
            <person name="Goeden M.A."/>
            <person name="Rose D.J."/>
            <person name="Mau B."/>
            <person name="Shao Y."/>
        </authorList>
    </citation>
    <scope>NUCLEOTIDE SEQUENCE [LARGE SCALE GENOMIC DNA]</scope>
    <source>
        <strain>K12 / MG1655 / ATCC 47076</strain>
    </source>
</reference>
<reference key="3">
    <citation type="journal article" date="2006" name="Mol. Syst. Biol.">
        <title>Highly accurate genome sequences of Escherichia coli K-12 strains MG1655 and W3110.</title>
        <authorList>
            <person name="Hayashi K."/>
            <person name="Morooka N."/>
            <person name="Yamamoto Y."/>
            <person name="Fujita K."/>
            <person name="Isono K."/>
            <person name="Choi S."/>
            <person name="Ohtsubo E."/>
            <person name="Baba T."/>
            <person name="Wanner B.L."/>
            <person name="Mori H."/>
            <person name="Horiuchi T."/>
        </authorList>
    </citation>
    <scope>NUCLEOTIDE SEQUENCE [LARGE SCALE GENOMIC DNA]</scope>
    <source>
        <strain>K12 / W3110 / ATCC 27325 / DSM 5911</strain>
    </source>
</reference>
<reference key="4">
    <citation type="journal article" date="2013" name="Appl. Microbiol. Biotechnol.">
        <title>Biosynthesis of ethylene glycol in Escherichia coli.</title>
        <authorList>
            <person name="Liu H."/>
            <person name="Ramos K.R."/>
            <person name="Valdehuesa K.N."/>
            <person name="Nisola G.M."/>
            <person name="Lee W.K."/>
            <person name="Chung W.J."/>
        </authorList>
    </citation>
    <scope>FUNCTION</scope>
    <scope>CATALYTIC ACTIVITY</scope>
    <scope>DISRUPTION PHENOTYPE</scope>
    <source>
        <strain>K12 / W3110 / ATCC 27325 / DSM 5911</strain>
    </source>
</reference>
<proteinExistence type="evidence at protein level"/>
<accession>P39359</accession>
<accession>Q2M617</accession>
<sequence length="301" mass="32722">MKKFSGIIPPVSSTFHRDGTLDKKAMREVADFLINKGVDGLFYLGTGGEFSQMNTAQRMALAEEAVTIVDGRVPVLIGVGSPSTDEAVKLAQHAQAYGADGIVAINPYYWKVAPRNLDDYYQQIARSVTLPVILYNFPDLTGQDLTPETVTRLALQNENIVGIKDTIDSVGHLRTMINTVKSVRPSFSVFCGYDDHLLNTMLLGGDGAITASANFAPELSVGIYRAWREGDLATAATLNKKLLQLPAIYALETPFVSLIKYSMQCVGLPVETYCLPPILEASEEAKDKVHVLLTAQGILPV</sequence>
<organism>
    <name type="scientific">Escherichia coli (strain K12)</name>
    <dbReference type="NCBI Taxonomy" id="83333"/>
    <lineage>
        <taxon>Bacteria</taxon>
        <taxon>Pseudomonadati</taxon>
        <taxon>Pseudomonadota</taxon>
        <taxon>Gammaproteobacteria</taxon>
        <taxon>Enterobacterales</taxon>
        <taxon>Enterobacteriaceae</taxon>
        <taxon>Escherichia</taxon>
    </lineage>
</organism>
<evidence type="ECO:0000250" key="1">
    <source>
        <dbReference type="UniProtKB" id="P75682"/>
    </source>
</evidence>
<evidence type="ECO:0000269" key="2">
    <source>
    </source>
</evidence>
<evidence type="ECO:0000305" key="3"/>
<evidence type="ECO:0000305" key="4">
    <source>
    </source>
</evidence>
<dbReference type="EC" id="4.1.2.28" evidence="4"/>
<dbReference type="EMBL" id="U14003">
    <property type="protein sequence ID" value="AAA97194.1"/>
    <property type="status" value="ALT_INIT"/>
    <property type="molecule type" value="Genomic_DNA"/>
</dbReference>
<dbReference type="EMBL" id="U00096">
    <property type="protein sequence ID" value="AAC77254.2"/>
    <property type="molecule type" value="Genomic_DNA"/>
</dbReference>
<dbReference type="EMBL" id="AP009048">
    <property type="protein sequence ID" value="BAE78289.1"/>
    <property type="molecule type" value="Genomic_DNA"/>
</dbReference>
<dbReference type="PIR" id="S56523">
    <property type="entry name" value="S56523"/>
</dbReference>
<dbReference type="RefSeq" id="NP_418718.4">
    <property type="nucleotide sequence ID" value="NC_000913.3"/>
</dbReference>
<dbReference type="RefSeq" id="WP_000714563.1">
    <property type="nucleotide sequence ID" value="NZ_SSUV01000012.1"/>
</dbReference>
<dbReference type="SMR" id="P39359"/>
<dbReference type="BioGRID" id="4260972">
    <property type="interactions" value="7"/>
</dbReference>
<dbReference type="DIP" id="DIP-12622N"/>
<dbReference type="FunCoup" id="P39359">
    <property type="interactions" value="511"/>
</dbReference>
<dbReference type="IntAct" id="P39359">
    <property type="interactions" value="1"/>
</dbReference>
<dbReference type="STRING" id="511145.b4298"/>
<dbReference type="PaxDb" id="511145-b4298"/>
<dbReference type="EnsemblBacteria" id="AAC77254">
    <property type="protein sequence ID" value="AAC77254"/>
    <property type="gene ID" value="b4298"/>
</dbReference>
<dbReference type="GeneID" id="948825"/>
<dbReference type="KEGG" id="ecj:JW5775"/>
<dbReference type="KEGG" id="eco:b4298"/>
<dbReference type="PATRIC" id="fig|511145.12.peg.4434"/>
<dbReference type="EchoBASE" id="EB2438"/>
<dbReference type="eggNOG" id="COG0329">
    <property type="taxonomic scope" value="Bacteria"/>
</dbReference>
<dbReference type="HOGENOM" id="CLU_049343_5_1_6"/>
<dbReference type="InParanoid" id="P39359"/>
<dbReference type="OMA" id="QAIKLSM"/>
<dbReference type="OrthoDB" id="199953at2"/>
<dbReference type="PhylomeDB" id="P39359"/>
<dbReference type="BioCyc" id="EcoCyc:G7911-MONOMER"/>
<dbReference type="BioCyc" id="MetaCyc:G7911-MONOMER"/>
<dbReference type="PRO" id="PR:P39359"/>
<dbReference type="Proteomes" id="UP000000625">
    <property type="component" value="Chromosome"/>
</dbReference>
<dbReference type="GO" id="GO:0005829">
    <property type="term" value="C:cytosol"/>
    <property type="evidence" value="ECO:0000318"/>
    <property type="project" value="GO_Central"/>
</dbReference>
<dbReference type="GO" id="GO:0047440">
    <property type="term" value="F:2-dehydro-3-deoxy-D-pentonate aldolase activity"/>
    <property type="evidence" value="ECO:0000315"/>
    <property type="project" value="EcoCyc"/>
</dbReference>
<dbReference type="GO" id="GO:0046176">
    <property type="term" value="P:aldonic acid catabolic process"/>
    <property type="evidence" value="ECO:0000315"/>
    <property type="project" value="EcoCyc"/>
</dbReference>
<dbReference type="CDD" id="cd00408">
    <property type="entry name" value="DHDPS-like"/>
    <property type="match status" value="1"/>
</dbReference>
<dbReference type="FunFam" id="3.20.20.70:FF:000269">
    <property type="entry name" value="Putative 2-dehydro-3-deoxy-D-gluconate aldolase YagE"/>
    <property type="match status" value="1"/>
</dbReference>
<dbReference type="Gene3D" id="3.20.20.70">
    <property type="entry name" value="Aldolase class I"/>
    <property type="match status" value="1"/>
</dbReference>
<dbReference type="InterPro" id="IPR013785">
    <property type="entry name" value="Aldolase_TIM"/>
</dbReference>
<dbReference type="InterPro" id="IPR002220">
    <property type="entry name" value="DapA-like"/>
</dbReference>
<dbReference type="InterPro" id="IPR020625">
    <property type="entry name" value="Schiff_base-form_aldolases_AS"/>
</dbReference>
<dbReference type="InterPro" id="IPR020624">
    <property type="entry name" value="Schiff_base-form_aldolases_CS"/>
</dbReference>
<dbReference type="PANTHER" id="PTHR12128:SF28">
    <property type="entry name" value="2-DEHYDRO-3-DEOXY-D-GLUCONATE ALDOLASE YAGE-RELATED"/>
    <property type="match status" value="1"/>
</dbReference>
<dbReference type="PANTHER" id="PTHR12128">
    <property type="entry name" value="DIHYDRODIPICOLINATE SYNTHASE"/>
    <property type="match status" value="1"/>
</dbReference>
<dbReference type="Pfam" id="PF00701">
    <property type="entry name" value="DHDPS"/>
    <property type="match status" value="1"/>
</dbReference>
<dbReference type="PIRSF" id="PIRSF001365">
    <property type="entry name" value="DHDPS"/>
    <property type="match status" value="1"/>
</dbReference>
<dbReference type="PRINTS" id="PR00146">
    <property type="entry name" value="DHPICSNTHASE"/>
</dbReference>
<dbReference type="SMART" id="SM01130">
    <property type="entry name" value="DHDPS"/>
    <property type="match status" value="1"/>
</dbReference>
<dbReference type="SUPFAM" id="SSF51569">
    <property type="entry name" value="Aldolase"/>
    <property type="match status" value="1"/>
</dbReference>
<dbReference type="PROSITE" id="PS00665">
    <property type="entry name" value="DHDPS_1"/>
    <property type="match status" value="1"/>
</dbReference>
<dbReference type="PROSITE" id="PS00666">
    <property type="entry name" value="DHDPS_2"/>
    <property type="match status" value="1"/>
</dbReference>
<comment type="function">
    <text evidence="4">Functions as a 2-dehydro-3-deoxy-D-pentonate aldolase.</text>
</comment>
<comment type="catalytic activity">
    <reaction evidence="4">
        <text>2-dehydro-3-deoxy-D-arabinonate = glycolaldehyde + pyruvate</text>
        <dbReference type="Rhea" id="RHEA:20609"/>
        <dbReference type="ChEBI" id="CHEBI:15361"/>
        <dbReference type="ChEBI" id="CHEBI:16699"/>
        <dbReference type="ChEBI" id="CHEBI:17071"/>
        <dbReference type="EC" id="4.1.2.28"/>
    </reaction>
</comment>
<comment type="subcellular location">
    <subcellularLocation>
        <location evidence="3">Cytoplasm</location>
    </subcellularLocation>
</comment>
<comment type="disruption phenotype">
    <text evidence="2">Disruption mutant has reduced ability to catabolize D-xylonic acid. YjhH-yagE double mutant cannot use D-xylonate as the sole source of carbon.</text>
</comment>
<comment type="similarity">
    <text evidence="3">Belongs to the DapA family.</text>
</comment>
<comment type="sequence caution" evidence="3">
    <conflict type="erroneous initiation">
        <sequence resource="EMBL-CDS" id="AAA97194"/>
    </conflict>
    <text>Extended N-terminus.</text>
</comment>
<name>YJHH_ECOLI</name>
<gene>
    <name type="primary">yjhH</name>
    <name type="ordered locus">b4298</name>
    <name type="ordered locus">JW5775</name>
</gene>
<protein>
    <recommendedName>
        <fullName evidence="3">Probable 2-dehydro-3-deoxy-D-pentonate aldolase YjhH</fullName>
        <ecNumber evidence="4">4.1.2.28</ecNumber>
    </recommendedName>
</protein>
<keyword id="KW-0963">Cytoplasm</keyword>
<keyword id="KW-0456">Lyase</keyword>
<keyword id="KW-1185">Reference proteome</keyword>
<keyword id="KW-0704">Schiff base</keyword>